<comment type="function">
    <text evidence="1">Catalyzes the phosphorylation of the hydroxyl group of 4-methyl-5-beta-hydroxyethylthiazole (THZ).</text>
</comment>
<comment type="catalytic activity">
    <reaction evidence="1">
        <text>5-(2-hydroxyethyl)-4-methylthiazole + ATP = 4-methyl-5-(2-phosphooxyethyl)-thiazole + ADP + H(+)</text>
        <dbReference type="Rhea" id="RHEA:24212"/>
        <dbReference type="ChEBI" id="CHEBI:15378"/>
        <dbReference type="ChEBI" id="CHEBI:17957"/>
        <dbReference type="ChEBI" id="CHEBI:30616"/>
        <dbReference type="ChEBI" id="CHEBI:58296"/>
        <dbReference type="ChEBI" id="CHEBI:456216"/>
        <dbReference type="EC" id="2.7.1.50"/>
    </reaction>
</comment>
<comment type="cofactor">
    <cofactor evidence="1">
        <name>Mg(2+)</name>
        <dbReference type="ChEBI" id="CHEBI:18420"/>
    </cofactor>
</comment>
<comment type="pathway">
    <text evidence="1">Cofactor biosynthesis; thiamine diphosphate biosynthesis; 4-methyl-5-(2-phosphoethyl)-thiazole from 5-(2-hydroxyethyl)-4-methylthiazole: step 1/1.</text>
</comment>
<comment type="similarity">
    <text evidence="1">Belongs to the Thz kinase family.</text>
</comment>
<sequence>MTSLKLLKEKAPLVICITNDVVKNFTANGLVALGASPAMSEFPADLEDLLKYAGGLLINIGTLTDENWKLYQAALKIAEKYNVPAVLDPVACGAGEYRKKVADDLINNYKLAAIRGNAGEIASLVGIDVASKGVDSAGVDNIDEIALAANEKFNIPIVVTGEVDAIAVNGEVVMIHNGSAMMPKVIGTGCLLGAVVASFIGLEKGQELKSLKTAVLVYNIAGEIAEKRPNGHLPGTFKVEFINALYEITDEDVKEFKRVK</sequence>
<accession>Q97RS6</accession>
<name>THIM1_STRPN</name>
<keyword id="KW-0067">ATP-binding</keyword>
<keyword id="KW-0418">Kinase</keyword>
<keyword id="KW-0460">Magnesium</keyword>
<keyword id="KW-0479">Metal-binding</keyword>
<keyword id="KW-0547">Nucleotide-binding</keyword>
<keyword id="KW-1185">Reference proteome</keyword>
<keyword id="KW-0784">Thiamine biosynthesis</keyword>
<keyword id="KW-0808">Transferase</keyword>
<evidence type="ECO:0000255" key="1">
    <source>
        <dbReference type="HAMAP-Rule" id="MF_00228"/>
    </source>
</evidence>
<proteinExistence type="inferred from homology"/>
<feature type="chain" id="PRO_0000156963" description="Hydroxyethylthiazole kinase 1">
    <location>
        <begin position="1"/>
        <end position="260"/>
    </location>
</feature>
<feature type="binding site" evidence="1">
    <location>
        <position position="39"/>
    </location>
    <ligand>
        <name>substrate</name>
    </ligand>
</feature>
<feature type="binding site" evidence="1">
    <location>
        <position position="115"/>
    </location>
    <ligand>
        <name>ATP</name>
        <dbReference type="ChEBI" id="CHEBI:30616"/>
    </ligand>
</feature>
<feature type="binding site" evidence="1">
    <location>
        <position position="160"/>
    </location>
    <ligand>
        <name>ATP</name>
        <dbReference type="ChEBI" id="CHEBI:30616"/>
    </ligand>
</feature>
<feature type="binding site" evidence="1">
    <location>
        <position position="187"/>
    </location>
    <ligand>
        <name>substrate</name>
    </ligand>
</feature>
<dbReference type="EC" id="2.7.1.50" evidence="1"/>
<dbReference type="EMBL" id="AE005672">
    <property type="protein sequence ID" value="AAK74858.1"/>
    <property type="molecule type" value="Genomic_DNA"/>
</dbReference>
<dbReference type="PIR" id="A95083">
    <property type="entry name" value="A95083"/>
</dbReference>
<dbReference type="SMR" id="Q97RS6"/>
<dbReference type="PaxDb" id="170187-SP_0717"/>
<dbReference type="EnsemblBacteria" id="AAK74858">
    <property type="protein sequence ID" value="AAK74858"/>
    <property type="gene ID" value="SP_0717"/>
</dbReference>
<dbReference type="KEGG" id="spn:SP_0717"/>
<dbReference type="eggNOG" id="COG2145">
    <property type="taxonomic scope" value="Bacteria"/>
</dbReference>
<dbReference type="PhylomeDB" id="Q97RS6"/>
<dbReference type="UniPathway" id="UPA00060">
    <property type="reaction ID" value="UER00139"/>
</dbReference>
<dbReference type="Proteomes" id="UP000000585">
    <property type="component" value="Chromosome"/>
</dbReference>
<dbReference type="GO" id="GO:0005524">
    <property type="term" value="F:ATP binding"/>
    <property type="evidence" value="ECO:0007669"/>
    <property type="project" value="UniProtKB-UniRule"/>
</dbReference>
<dbReference type="GO" id="GO:0004417">
    <property type="term" value="F:hydroxyethylthiazole kinase activity"/>
    <property type="evidence" value="ECO:0007669"/>
    <property type="project" value="UniProtKB-UniRule"/>
</dbReference>
<dbReference type="GO" id="GO:0000287">
    <property type="term" value="F:magnesium ion binding"/>
    <property type="evidence" value="ECO:0007669"/>
    <property type="project" value="UniProtKB-UniRule"/>
</dbReference>
<dbReference type="GO" id="GO:0009228">
    <property type="term" value="P:thiamine biosynthetic process"/>
    <property type="evidence" value="ECO:0007669"/>
    <property type="project" value="UniProtKB-KW"/>
</dbReference>
<dbReference type="GO" id="GO:0009229">
    <property type="term" value="P:thiamine diphosphate biosynthetic process"/>
    <property type="evidence" value="ECO:0007669"/>
    <property type="project" value="UniProtKB-UniRule"/>
</dbReference>
<dbReference type="CDD" id="cd01170">
    <property type="entry name" value="THZ_kinase"/>
    <property type="match status" value="1"/>
</dbReference>
<dbReference type="Gene3D" id="3.40.1190.20">
    <property type="match status" value="1"/>
</dbReference>
<dbReference type="HAMAP" id="MF_00228">
    <property type="entry name" value="Thz_kinase"/>
    <property type="match status" value="1"/>
</dbReference>
<dbReference type="InterPro" id="IPR000417">
    <property type="entry name" value="Hyethyz_kinase"/>
</dbReference>
<dbReference type="InterPro" id="IPR029056">
    <property type="entry name" value="Ribokinase-like"/>
</dbReference>
<dbReference type="NCBIfam" id="NF006830">
    <property type="entry name" value="PRK09355.1"/>
    <property type="match status" value="1"/>
</dbReference>
<dbReference type="NCBIfam" id="TIGR00694">
    <property type="entry name" value="thiM"/>
    <property type="match status" value="1"/>
</dbReference>
<dbReference type="Pfam" id="PF02110">
    <property type="entry name" value="HK"/>
    <property type="match status" value="1"/>
</dbReference>
<dbReference type="PIRSF" id="PIRSF000513">
    <property type="entry name" value="Thz_kinase"/>
    <property type="match status" value="1"/>
</dbReference>
<dbReference type="PRINTS" id="PR01099">
    <property type="entry name" value="HYETHTZKNASE"/>
</dbReference>
<dbReference type="SUPFAM" id="SSF53613">
    <property type="entry name" value="Ribokinase-like"/>
    <property type="match status" value="1"/>
</dbReference>
<organism>
    <name type="scientific">Streptococcus pneumoniae serotype 4 (strain ATCC BAA-334 / TIGR4)</name>
    <dbReference type="NCBI Taxonomy" id="170187"/>
    <lineage>
        <taxon>Bacteria</taxon>
        <taxon>Bacillati</taxon>
        <taxon>Bacillota</taxon>
        <taxon>Bacilli</taxon>
        <taxon>Lactobacillales</taxon>
        <taxon>Streptococcaceae</taxon>
        <taxon>Streptococcus</taxon>
    </lineage>
</organism>
<protein>
    <recommendedName>
        <fullName evidence="1">Hydroxyethylthiazole kinase 1</fullName>
        <ecNumber evidence="1">2.7.1.50</ecNumber>
    </recommendedName>
    <alternativeName>
        <fullName evidence="1">4-methyl-5-beta-hydroxyethylthiazole kinase 1</fullName>
        <shortName evidence="1">TH kinase 1</shortName>
        <shortName evidence="1">Thz kinase 1</shortName>
    </alternativeName>
</protein>
<reference key="1">
    <citation type="journal article" date="2001" name="Science">
        <title>Complete genome sequence of a virulent isolate of Streptococcus pneumoniae.</title>
        <authorList>
            <person name="Tettelin H."/>
            <person name="Nelson K.E."/>
            <person name="Paulsen I.T."/>
            <person name="Eisen J.A."/>
            <person name="Read T.D."/>
            <person name="Peterson S.N."/>
            <person name="Heidelberg J.F."/>
            <person name="DeBoy R.T."/>
            <person name="Haft D.H."/>
            <person name="Dodson R.J."/>
            <person name="Durkin A.S."/>
            <person name="Gwinn M.L."/>
            <person name="Kolonay J.F."/>
            <person name="Nelson W.C."/>
            <person name="Peterson J.D."/>
            <person name="Umayam L.A."/>
            <person name="White O."/>
            <person name="Salzberg S.L."/>
            <person name="Lewis M.R."/>
            <person name="Radune D."/>
            <person name="Holtzapple E.K."/>
            <person name="Khouri H.M."/>
            <person name="Wolf A.M."/>
            <person name="Utterback T.R."/>
            <person name="Hansen C.L."/>
            <person name="McDonald L.A."/>
            <person name="Feldblyum T.V."/>
            <person name="Angiuoli S.V."/>
            <person name="Dickinson T."/>
            <person name="Hickey E.K."/>
            <person name="Holt I.E."/>
            <person name="Loftus B.J."/>
            <person name="Yang F."/>
            <person name="Smith H.O."/>
            <person name="Venter J.C."/>
            <person name="Dougherty B.A."/>
            <person name="Morrison D.A."/>
            <person name="Hollingshead S.K."/>
            <person name="Fraser C.M."/>
        </authorList>
    </citation>
    <scope>NUCLEOTIDE SEQUENCE [LARGE SCALE GENOMIC DNA]</scope>
    <source>
        <strain>ATCC BAA-334 / TIGR4</strain>
    </source>
</reference>
<gene>
    <name evidence="1" type="primary">thiM1</name>
    <name type="ordered locus">SP_0717</name>
</gene>